<keyword id="KW-0328">Glycosyltransferase</keyword>
<keyword id="KW-1185">Reference proteome</keyword>
<keyword id="KW-0694">RNA-binding</keyword>
<keyword id="KW-0804">Transcription</keyword>
<keyword id="KW-0805">Transcription regulation</keyword>
<keyword id="KW-0806">Transcription termination</keyword>
<keyword id="KW-0808">Transferase</keyword>
<gene>
    <name evidence="1" type="primary">pyrR</name>
    <name type="ordered locus">SPD_1134</name>
</gene>
<proteinExistence type="inferred from homology"/>
<sequence length="173" mass="19608">MKTKEVVDELTVKRAITRITYEIIERNKDLNKIVLAGIKTRGVFIAHRIQERLKQLENLSVPVVELDTKPFRDDVKSGEDTSLVSVDVTDREVILVDDVLYTGRTIRAAIDNIVGHGRPARVSLAVLVDRGHRELPIRPDYVGKNIPTSRSEEIIVEMTELDDQDRVLITEEA</sequence>
<reference key="1">
    <citation type="journal article" date="2007" name="J. Bacteriol.">
        <title>Genome sequence of Avery's virulent serotype 2 strain D39 of Streptococcus pneumoniae and comparison with that of unencapsulated laboratory strain R6.</title>
        <authorList>
            <person name="Lanie J.A."/>
            <person name="Ng W.-L."/>
            <person name="Kazmierczak K.M."/>
            <person name="Andrzejewski T.M."/>
            <person name="Davidsen T.M."/>
            <person name="Wayne K.J."/>
            <person name="Tettelin H."/>
            <person name="Glass J.I."/>
            <person name="Winkler M.E."/>
        </authorList>
    </citation>
    <scope>NUCLEOTIDE SEQUENCE [LARGE SCALE GENOMIC DNA]</scope>
    <source>
        <strain>D39 / NCTC 7466</strain>
    </source>
</reference>
<name>PYRR_STRP2</name>
<feature type="chain" id="PRO_1000053869" description="Bifunctional protein PyrR">
    <location>
        <begin position="1"/>
        <end position="173"/>
    </location>
</feature>
<feature type="short sequence motif" description="PRPP-binding" evidence="1">
    <location>
        <begin position="93"/>
        <end position="105"/>
    </location>
</feature>
<evidence type="ECO:0000255" key="1">
    <source>
        <dbReference type="HAMAP-Rule" id="MF_01219"/>
    </source>
</evidence>
<dbReference type="EC" id="2.4.2.9" evidence="1"/>
<dbReference type="EMBL" id="CP000410">
    <property type="protein sequence ID" value="ABJ54004.1"/>
    <property type="molecule type" value="Genomic_DNA"/>
</dbReference>
<dbReference type="RefSeq" id="WP_000850024.1">
    <property type="nucleotide sequence ID" value="NZ_JAMLJR010000006.1"/>
</dbReference>
<dbReference type="SMR" id="Q04K45"/>
<dbReference type="PaxDb" id="373153-SPD_1134"/>
<dbReference type="GeneID" id="45653435"/>
<dbReference type="KEGG" id="spd:SPD_1134"/>
<dbReference type="eggNOG" id="COG2065">
    <property type="taxonomic scope" value="Bacteria"/>
</dbReference>
<dbReference type="HOGENOM" id="CLU_094234_2_1_9"/>
<dbReference type="BioCyc" id="SPNE373153:G1G6V-1225-MONOMER"/>
<dbReference type="Proteomes" id="UP000001452">
    <property type="component" value="Chromosome"/>
</dbReference>
<dbReference type="GO" id="GO:0003723">
    <property type="term" value="F:RNA binding"/>
    <property type="evidence" value="ECO:0007669"/>
    <property type="project" value="UniProtKB-UniRule"/>
</dbReference>
<dbReference type="GO" id="GO:0004845">
    <property type="term" value="F:uracil phosphoribosyltransferase activity"/>
    <property type="evidence" value="ECO:0007669"/>
    <property type="project" value="UniProtKB-UniRule"/>
</dbReference>
<dbReference type="GO" id="GO:0006353">
    <property type="term" value="P:DNA-templated transcription termination"/>
    <property type="evidence" value="ECO:0007669"/>
    <property type="project" value="UniProtKB-UniRule"/>
</dbReference>
<dbReference type="CDD" id="cd06223">
    <property type="entry name" value="PRTases_typeI"/>
    <property type="match status" value="1"/>
</dbReference>
<dbReference type="FunFam" id="3.40.50.2020:FF:000020">
    <property type="entry name" value="Bifunctional protein PyrR"/>
    <property type="match status" value="1"/>
</dbReference>
<dbReference type="Gene3D" id="3.40.50.2020">
    <property type="match status" value="1"/>
</dbReference>
<dbReference type="HAMAP" id="MF_01219">
    <property type="entry name" value="PyrR"/>
    <property type="match status" value="1"/>
</dbReference>
<dbReference type="InterPro" id="IPR000836">
    <property type="entry name" value="PRibTrfase_dom"/>
</dbReference>
<dbReference type="InterPro" id="IPR029057">
    <property type="entry name" value="PRTase-like"/>
</dbReference>
<dbReference type="InterPro" id="IPR023050">
    <property type="entry name" value="PyrR"/>
</dbReference>
<dbReference type="InterPro" id="IPR050137">
    <property type="entry name" value="PyrR_bifunctional"/>
</dbReference>
<dbReference type="NCBIfam" id="NF003548">
    <property type="entry name" value="PRK05205.1-4"/>
    <property type="match status" value="1"/>
</dbReference>
<dbReference type="NCBIfam" id="NF003549">
    <property type="entry name" value="PRK05205.1-5"/>
    <property type="match status" value="1"/>
</dbReference>
<dbReference type="PANTHER" id="PTHR11608">
    <property type="entry name" value="BIFUNCTIONAL PROTEIN PYRR"/>
    <property type="match status" value="1"/>
</dbReference>
<dbReference type="PANTHER" id="PTHR11608:SF0">
    <property type="entry name" value="BIFUNCTIONAL PROTEIN PYRR"/>
    <property type="match status" value="1"/>
</dbReference>
<dbReference type="Pfam" id="PF00156">
    <property type="entry name" value="Pribosyltran"/>
    <property type="match status" value="1"/>
</dbReference>
<dbReference type="SUPFAM" id="SSF53271">
    <property type="entry name" value="PRTase-like"/>
    <property type="match status" value="1"/>
</dbReference>
<protein>
    <recommendedName>
        <fullName evidence="1">Bifunctional protein PyrR</fullName>
    </recommendedName>
    <domain>
        <recommendedName>
            <fullName evidence="1">Pyrimidine operon regulatory protein</fullName>
        </recommendedName>
    </domain>
    <domain>
        <recommendedName>
            <fullName evidence="1">Uracil phosphoribosyltransferase</fullName>
            <shortName evidence="1">UPRTase</shortName>
            <ecNumber evidence="1">2.4.2.9</ecNumber>
        </recommendedName>
    </domain>
</protein>
<organism>
    <name type="scientific">Streptococcus pneumoniae serotype 2 (strain D39 / NCTC 7466)</name>
    <dbReference type="NCBI Taxonomy" id="373153"/>
    <lineage>
        <taxon>Bacteria</taxon>
        <taxon>Bacillati</taxon>
        <taxon>Bacillota</taxon>
        <taxon>Bacilli</taxon>
        <taxon>Lactobacillales</taxon>
        <taxon>Streptococcaceae</taxon>
        <taxon>Streptococcus</taxon>
    </lineage>
</organism>
<comment type="function">
    <text evidence="1">Regulates transcriptional attenuation of the pyrimidine nucleotide (pyr) operon by binding in a uridine-dependent manner to specific sites on pyr mRNA. This disrupts an antiterminator hairpin in the RNA and favors formation of a downstream transcription terminator, leading to a reduced expression of downstream genes.</text>
</comment>
<comment type="function">
    <text evidence="1">Also displays a weak uracil phosphoribosyltransferase activity which is not physiologically significant.</text>
</comment>
<comment type="catalytic activity">
    <reaction evidence="1">
        <text>UMP + diphosphate = 5-phospho-alpha-D-ribose 1-diphosphate + uracil</text>
        <dbReference type="Rhea" id="RHEA:13017"/>
        <dbReference type="ChEBI" id="CHEBI:17568"/>
        <dbReference type="ChEBI" id="CHEBI:33019"/>
        <dbReference type="ChEBI" id="CHEBI:57865"/>
        <dbReference type="ChEBI" id="CHEBI:58017"/>
        <dbReference type="EC" id="2.4.2.9"/>
    </reaction>
</comment>
<comment type="subunit">
    <text evidence="1">Homodimer and homohexamer; in equilibrium.</text>
</comment>
<comment type="similarity">
    <text evidence="1">Belongs to the purine/pyrimidine phosphoribosyltransferase family. PyrR subfamily.</text>
</comment>
<accession>Q04K45</accession>